<protein>
    <recommendedName>
        <fullName evidence="1">Pyrimidine-specific ribonucleoside hydrolase RihA</fullName>
        <ecNumber evidence="1">3.2.-.-</ecNumber>
    </recommendedName>
    <alternativeName>
        <fullName evidence="1">Cytidine/uridine-specific hydrolase</fullName>
    </alternativeName>
</protein>
<gene>
    <name evidence="1" type="primary">rihA</name>
    <name type="ordered locus">SPAB_02889</name>
</gene>
<dbReference type="EC" id="3.2.-.-" evidence="1"/>
<dbReference type="EMBL" id="CP000886">
    <property type="protein sequence ID" value="ABX68253.1"/>
    <property type="molecule type" value="Genomic_DNA"/>
</dbReference>
<dbReference type="RefSeq" id="WP_001207423.1">
    <property type="nucleotide sequence ID" value="NC_010102.1"/>
</dbReference>
<dbReference type="SMR" id="A9MUJ0"/>
<dbReference type="KEGG" id="spq:SPAB_02889"/>
<dbReference type="PATRIC" id="fig|1016998.12.peg.2722"/>
<dbReference type="HOGENOM" id="CLU_036838_2_0_6"/>
<dbReference type="BioCyc" id="SENT1016998:SPAB_RS11755-MONOMER"/>
<dbReference type="Proteomes" id="UP000008556">
    <property type="component" value="Chromosome"/>
</dbReference>
<dbReference type="GO" id="GO:0005829">
    <property type="term" value="C:cytosol"/>
    <property type="evidence" value="ECO:0007669"/>
    <property type="project" value="TreeGrafter"/>
</dbReference>
<dbReference type="GO" id="GO:0008477">
    <property type="term" value="F:purine nucleosidase activity"/>
    <property type="evidence" value="ECO:0007669"/>
    <property type="project" value="TreeGrafter"/>
</dbReference>
<dbReference type="GO" id="GO:0045437">
    <property type="term" value="F:uridine nucleosidase activity"/>
    <property type="evidence" value="ECO:0007669"/>
    <property type="project" value="InterPro"/>
</dbReference>
<dbReference type="GO" id="GO:0015949">
    <property type="term" value="P:nucleobase-containing small molecule interconversion"/>
    <property type="evidence" value="ECO:0007669"/>
    <property type="project" value="InterPro"/>
</dbReference>
<dbReference type="GO" id="GO:0006152">
    <property type="term" value="P:purine nucleoside catabolic process"/>
    <property type="evidence" value="ECO:0007669"/>
    <property type="project" value="TreeGrafter"/>
</dbReference>
<dbReference type="GO" id="GO:0006206">
    <property type="term" value="P:pyrimidine nucleobase metabolic process"/>
    <property type="evidence" value="ECO:0007669"/>
    <property type="project" value="UniProtKB-UniRule"/>
</dbReference>
<dbReference type="CDD" id="cd02651">
    <property type="entry name" value="nuc_hydro_IU_UC_XIUA"/>
    <property type="match status" value="1"/>
</dbReference>
<dbReference type="FunFam" id="3.90.245.10:FF:000001">
    <property type="entry name" value="Pyrimidine-specific ribonucleoside hydrolase RihA"/>
    <property type="match status" value="1"/>
</dbReference>
<dbReference type="Gene3D" id="3.90.245.10">
    <property type="entry name" value="Ribonucleoside hydrolase-like"/>
    <property type="match status" value="1"/>
</dbReference>
<dbReference type="HAMAP" id="MF_01431">
    <property type="entry name" value="Pyrim_hydro_RihA"/>
    <property type="match status" value="1"/>
</dbReference>
<dbReference type="InterPro" id="IPR015910">
    <property type="entry name" value="I/U_nuclsd_hydro_CS"/>
</dbReference>
<dbReference type="InterPro" id="IPR001910">
    <property type="entry name" value="Inosine/uridine_hydrolase_dom"/>
</dbReference>
<dbReference type="InterPro" id="IPR023186">
    <property type="entry name" value="IUNH"/>
</dbReference>
<dbReference type="InterPro" id="IPR022975">
    <property type="entry name" value="Pyrim_hydro_RihA"/>
</dbReference>
<dbReference type="InterPro" id="IPR036452">
    <property type="entry name" value="Ribo_hydro-like"/>
</dbReference>
<dbReference type="NCBIfam" id="NF007761">
    <property type="entry name" value="PRK10443.1"/>
    <property type="match status" value="1"/>
</dbReference>
<dbReference type="PANTHER" id="PTHR12304">
    <property type="entry name" value="INOSINE-URIDINE PREFERRING NUCLEOSIDE HYDROLASE"/>
    <property type="match status" value="1"/>
</dbReference>
<dbReference type="PANTHER" id="PTHR12304:SF4">
    <property type="entry name" value="URIDINE NUCLEOSIDASE"/>
    <property type="match status" value="1"/>
</dbReference>
<dbReference type="Pfam" id="PF01156">
    <property type="entry name" value="IU_nuc_hydro"/>
    <property type="match status" value="1"/>
</dbReference>
<dbReference type="SUPFAM" id="SSF53590">
    <property type="entry name" value="Nucleoside hydrolase"/>
    <property type="match status" value="1"/>
</dbReference>
<dbReference type="PROSITE" id="PS01247">
    <property type="entry name" value="IUNH"/>
    <property type="match status" value="1"/>
</dbReference>
<reference key="1">
    <citation type="submission" date="2007-11" db="EMBL/GenBank/DDBJ databases">
        <authorList>
            <consortium name="The Salmonella enterica serovar Paratyphi B Genome Sequencing Project"/>
            <person name="McClelland M."/>
            <person name="Sanderson E.K."/>
            <person name="Porwollik S."/>
            <person name="Spieth J."/>
            <person name="Clifton W.S."/>
            <person name="Fulton R."/>
            <person name="Cordes M."/>
            <person name="Wollam A."/>
            <person name="Shah N."/>
            <person name="Pepin K."/>
            <person name="Bhonagiri V."/>
            <person name="Nash W."/>
            <person name="Johnson M."/>
            <person name="Thiruvilangam P."/>
            <person name="Wilson R."/>
        </authorList>
    </citation>
    <scope>NUCLEOTIDE SEQUENCE [LARGE SCALE GENOMIC DNA]</scope>
    <source>
        <strain>ATCC BAA-1250 / SPB7</strain>
    </source>
</reference>
<proteinExistence type="inferred from homology"/>
<keyword id="KW-0326">Glycosidase</keyword>
<keyword id="KW-0378">Hydrolase</keyword>
<organism>
    <name type="scientific">Salmonella paratyphi B (strain ATCC BAA-1250 / SPB7)</name>
    <dbReference type="NCBI Taxonomy" id="1016998"/>
    <lineage>
        <taxon>Bacteria</taxon>
        <taxon>Pseudomonadati</taxon>
        <taxon>Pseudomonadota</taxon>
        <taxon>Gammaproteobacteria</taxon>
        <taxon>Enterobacterales</taxon>
        <taxon>Enterobacteriaceae</taxon>
        <taxon>Salmonella</taxon>
    </lineage>
</organism>
<name>RIHA_SALPB</name>
<sequence length="311" mass="33833">MALPIIIDCDPGHDDAIALVLALASPELEVKAITSSAGNQTPEKTLRNVLRMLTLLKRPDIPVAGGAVKPLMRELIIADNVHGESGLDGPALPEPSFAPQSGTAVELMAKTLRESAQPVTIVSTGPQTNVALLLNSHPELHTKIARIVIMGGAMALGNWTPAAEFNIYVDPEAAEIVFQSGIPVVMAGLDVTHKAQIHAADIERFRDIGNPISTIVAELLDFFFEYHKDEKWGFVGAPLHDPCTIAWLLKPEIFTTVERWVGVETQGKYTQGMTVVDYYFLTGNKPNATVMVDVDRQGFVDLLAERLQYYA</sequence>
<evidence type="ECO:0000255" key="1">
    <source>
        <dbReference type="HAMAP-Rule" id="MF_01431"/>
    </source>
</evidence>
<accession>A9MUJ0</accession>
<comment type="function">
    <text evidence="1">Hydrolyzes cytidine or uridine to ribose and cytosine or uracil, respectively.</text>
</comment>
<comment type="similarity">
    <text evidence="1">Belongs to the IUNH family. RihA subfamily.</text>
</comment>
<feature type="chain" id="PRO_1000087436" description="Pyrimidine-specific ribonucleoside hydrolase RihA">
    <location>
        <begin position="1"/>
        <end position="311"/>
    </location>
</feature>
<feature type="active site" evidence="1">
    <location>
        <position position="240"/>
    </location>
</feature>